<organism>
    <name type="scientific">Eunectes notaeus</name>
    <name type="common">Yellow anaconda</name>
    <dbReference type="NCBI Taxonomy" id="51877"/>
    <lineage>
        <taxon>Eukaryota</taxon>
        <taxon>Metazoa</taxon>
        <taxon>Chordata</taxon>
        <taxon>Craniata</taxon>
        <taxon>Vertebrata</taxon>
        <taxon>Euteleostomi</taxon>
        <taxon>Lepidosauria</taxon>
        <taxon>Squamata</taxon>
        <taxon>Bifurcata</taxon>
        <taxon>Unidentata</taxon>
        <taxon>Episquamata</taxon>
        <taxon>Toxicofera</taxon>
        <taxon>Serpentes</taxon>
        <taxon>Henophidia</taxon>
        <taxon>Boidae</taxon>
        <taxon>Boinae</taxon>
        <taxon>Eunectes</taxon>
    </lineage>
</organism>
<gene>
    <name type="primary">MT-CYB</name>
    <name type="synonym">COB</name>
    <name type="synonym">CYTB</name>
    <name type="synonym">MTCYB</name>
</gene>
<sequence>MPHQQILMLFGLLPVATNISTWWNFGSMLIACSTLQVLTGFFLAVHYTANINLAFSSIIHITRDVPYGWLMQNLHAIGASMFFICIYIHIARGLYYGSYLNKETWLSGTTLLIMLMATAFFGYVLPWGQMSFWAATVITNLLTAIPYLGTTMTTWLWGGFAINDPTLTRFFALHFILPFGIISMSSLHVMLLHEEGSSNPLGTNSDIDKIPFHPYHTYKDLLMLAAMTTLLLLIVSFSPDIFNDPDNFSKANPLVTPQRIKPEWYFLFAYGILRSIPNKLGGALALTMSIVILLTVPFTHTSKMRSMMFRPFMQMTFWLFAATFMVITWTATKPVEPPFTLIGQAASMIYFLFFISNPIMGWLENKIMKM</sequence>
<keyword id="KW-0249">Electron transport</keyword>
<keyword id="KW-0349">Heme</keyword>
<keyword id="KW-0408">Iron</keyword>
<keyword id="KW-0472">Membrane</keyword>
<keyword id="KW-0479">Metal-binding</keyword>
<keyword id="KW-0496">Mitochondrion</keyword>
<keyword id="KW-0999">Mitochondrion inner membrane</keyword>
<keyword id="KW-0679">Respiratory chain</keyword>
<keyword id="KW-0812">Transmembrane</keyword>
<keyword id="KW-1133">Transmembrane helix</keyword>
<keyword id="KW-0813">Transport</keyword>
<keyword id="KW-0830">Ubiquinone</keyword>
<feature type="chain" id="PRO_0000060963" description="Cytochrome b">
    <location>
        <begin position="1"/>
        <end position="370"/>
    </location>
</feature>
<feature type="transmembrane region" description="Helical" evidence="2">
    <location>
        <begin position="25"/>
        <end position="45"/>
    </location>
</feature>
<feature type="transmembrane region" description="Helical" evidence="2">
    <location>
        <begin position="69"/>
        <end position="90"/>
    </location>
</feature>
<feature type="transmembrane region" description="Helical" evidence="2">
    <location>
        <begin position="105"/>
        <end position="125"/>
    </location>
</feature>
<feature type="transmembrane region" description="Helical" evidence="2">
    <location>
        <begin position="170"/>
        <end position="190"/>
    </location>
</feature>
<feature type="transmembrane region" description="Helical" evidence="2">
    <location>
        <begin position="218"/>
        <end position="238"/>
    </location>
</feature>
<feature type="transmembrane region" description="Helical" evidence="2">
    <location>
        <begin position="280"/>
        <end position="300"/>
    </location>
</feature>
<feature type="transmembrane region" description="Helical" evidence="2">
    <location>
        <begin position="312"/>
        <end position="332"/>
    </location>
</feature>
<feature type="transmembrane region" description="Helical" evidence="2">
    <location>
        <begin position="339"/>
        <end position="358"/>
    </location>
</feature>
<feature type="binding site" description="axial binding residue" evidence="2">
    <location>
        <position position="75"/>
    </location>
    <ligand>
        <name>heme b</name>
        <dbReference type="ChEBI" id="CHEBI:60344"/>
        <label>b562</label>
    </ligand>
    <ligandPart>
        <name>Fe</name>
        <dbReference type="ChEBI" id="CHEBI:18248"/>
    </ligandPart>
</feature>
<feature type="binding site" description="axial binding residue" evidence="2">
    <location>
        <position position="89"/>
    </location>
    <ligand>
        <name>heme b</name>
        <dbReference type="ChEBI" id="CHEBI:60344"/>
        <label>b566</label>
    </ligand>
    <ligandPart>
        <name>Fe</name>
        <dbReference type="ChEBI" id="CHEBI:18248"/>
    </ligandPart>
</feature>
<feature type="binding site" description="axial binding residue" evidence="2">
    <location>
        <position position="174"/>
    </location>
    <ligand>
        <name>heme b</name>
        <dbReference type="ChEBI" id="CHEBI:60344"/>
        <label>b562</label>
    </ligand>
    <ligandPart>
        <name>Fe</name>
        <dbReference type="ChEBI" id="CHEBI:18248"/>
    </ligandPart>
</feature>
<feature type="binding site" description="axial binding residue" evidence="2">
    <location>
        <position position="188"/>
    </location>
    <ligand>
        <name>heme b</name>
        <dbReference type="ChEBI" id="CHEBI:60344"/>
        <label>b566</label>
    </ligand>
    <ligandPart>
        <name>Fe</name>
        <dbReference type="ChEBI" id="CHEBI:18248"/>
    </ligandPart>
</feature>
<feature type="binding site" evidence="2">
    <location>
        <position position="193"/>
    </location>
    <ligand>
        <name>a ubiquinone</name>
        <dbReference type="ChEBI" id="CHEBI:16389"/>
    </ligand>
</feature>
<proteinExistence type="inferred from homology"/>
<comment type="function">
    <text evidence="2">Component of the ubiquinol-cytochrome c reductase complex (complex III or cytochrome b-c1 complex) that is part of the mitochondrial respiratory chain. The b-c1 complex mediates electron transfer from ubiquinol to cytochrome c. Contributes to the generation of a proton gradient across the mitochondrial membrane that is then used for ATP synthesis.</text>
</comment>
<comment type="cofactor">
    <cofactor evidence="2">
        <name>heme b</name>
        <dbReference type="ChEBI" id="CHEBI:60344"/>
    </cofactor>
    <text evidence="2">Binds 2 heme b groups non-covalently.</text>
</comment>
<comment type="subunit">
    <text evidence="2">The cytochrome bc1 complex contains 3 respiratory subunits (MT-CYB, CYC1 and UQCRFS1), 2 core proteins (UQCRC1 and UQCRC2) and probably 6 low-molecular weight proteins.</text>
</comment>
<comment type="subcellular location">
    <subcellularLocation>
        <location evidence="2">Mitochondrion inner membrane</location>
        <topology evidence="2">Multi-pass membrane protein</topology>
    </subcellularLocation>
</comment>
<comment type="miscellaneous">
    <text evidence="1">Heme 1 (or BL or b562) is low-potential and absorbs at about 562 nm, and heme 2 (or BH or b566) is high-potential and absorbs at about 566 nm.</text>
</comment>
<comment type="similarity">
    <text evidence="3 4">Belongs to the cytochrome b family.</text>
</comment>
<comment type="caution">
    <text evidence="2">The full-length protein contains only eight transmembrane helices, not nine as predicted by bioinformatics tools.</text>
</comment>
<reference key="1">
    <citation type="thesis" date="1997" institute="Queen's University / Kingston" country="Canada">
        <title>Hic Sunt Serpentes -- molecular phylogenetics and the Boidae (Serpentes: Booidea).</title>
        <authorList>
            <person name="Campbell B.N."/>
        </authorList>
    </citation>
    <scope>NUCLEOTIDE SEQUENCE [GENOMIC DNA]</scope>
</reference>
<accession>O48065</accession>
<evidence type="ECO:0000250" key="1"/>
<evidence type="ECO:0000250" key="2">
    <source>
        <dbReference type="UniProtKB" id="P00157"/>
    </source>
</evidence>
<evidence type="ECO:0000255" key="3">
    <source>
        <dbReference type="PROSITE-ProRule" id="PRU00967"/>
    </source>
</evidence>
<evidence type="ECO:0000255" key="4">
    <source>
        <dbReference type="PROSITE-ProRule" id="PRU00968"/>
    </source>
</evidence>
<dbReference type="EMBL" id="U69810">
    <property type="protein sequence ID" value="AAC01844.1"/>
    <property type="molecule type" value="Genomic_DNA"/>
</dbReference>
<dbReference type="SMR" id="O48065"/>
<dbReference type="GO" id="GO:0005743">
    <property type="term" value="C:mitochondrial inner membrane"/>
    <property type="evidence" value="ECO:0007669"/>
    <property type="project" value="UniProtKB-SubCell"/>
</dbReference>
<dbReference type="GO" id="GO:0045275">
    <property type="term" value="C:respiratory chain complex III"/>
    <property type="evidence" value="ECO:0007669"/>
    <property type="project" value="InterPro"/>
</dbReference>
<dbReference type="GO" id="GO:0046872">
    <property type="term" value="F:metal ion binding"/>
    <property type="evidence" value="ECO:0007669"/>
    <property type="project" value="UniProtKB-KW"/>
</dbReference>
<dbReference type="GO" id="GO:0008121">
    <property type="term" value="F:ubiquinol-cytochrome-c reductase activity"/>
    <property type="evidence" value="ECO:0007669"/>
    <property type="project" value="InterPro"/>
</dbReference>
<dbReference type="GO" id="GO:0006122">
    <property type="term" value="P:mitochondrial electron transport, ubiquinol to cytochrome c"/>
    <property type="evidence" value="ECO:0007669"/>
    <property type="project" value="TreeGrafter"/>
</dbReference>
<dbReference type="CDD" id="cd00290">
    <property type="entry name" value="cytochrome_b_C"/>
    <property type="match status" value="1"/>
</dbReference>
<dbReference type="CDD" id="cd00284">
    <property type="entry name" value="Cytochrome_b_N"/>
    <property type="match status" value="1"/>
</dbReference>
<dbReference type="Gene3D" id="1.20.810.10">
    <property type="entry name" value="Cytochrome Bc1 Complex, Chain C"/>
    <property type="match status" value="1"/>
</dbReference>
<dbReference type="InterPro" id="IPR005798">
    <property type="entry name" value="Cyt_b/b6_C"/>
</dbReference>
<dbReference type="InterPro" id="IPR036150">
    <property type="entry name" value="Cyt_b/b6_C_sf"/>
</dbReference>
<dbReference type="InterPro" id="IPR005797">
    <property type="entry name" value="Cyt_b/b6_N"/>
</dbReference>
<dbReference type="InterPro" id="IPR027387">
    <property type="entry name" value="Cytb/b6-like_sf"/>
</dbReference>
<dbReference type="InterPro" id="IPR030689">
    <property type="entry name" value="Cytochrome_b"/>
</dbReference>
<dbReference type="InterPro" id="IPR048260">
    <property type="entry name" value="Cytochrome_b_C_euk/bac"/>
</dbReference>
<dbReference type="InterPro" id="IPR048259">
    <property type="entry name" value="Cytochrome_b_N_euk/bac"/>
</dbReference>
<dbReference type="InterPro" id="IPR016174">
    <property type="entry name" value="Di-haem_cyt_TM"/>
</dbReference>
<dbReference type="PANTHER" id="PTHR19271">
    <property type="entry name" value="CYTOCHROME B"/>
    <property type="match status" value="1"/>
</dbReference>
<dbReference type="PANTHER" id="PTHR19271:SF16">
    <property type="entry name" value="CYTOCHROME B"/>
    <property type="match status" value="1"/>
</dbReference>
<dbReference type="Pfam" id="PF00032">
    <property type="entry name" value="Cytochrom_B_C"/>
    <property type="match status" value="1"/>
</dbReference>
<dbReference type="Pfam" id="PF00033">
    <property type="entry name" value="Cytochrome_B"/>
    <property type="match status" value="1"/>
</dbReference>
<dbReference type="PIRSF" id="PIRSF038885">
    <property type="entry name" value="COB"/>
    <property type="match status" value="1"/>
</dbReference>
<dbReference type="SUPFAM" id="SSF81648">
    <property type="entry name" value="a domain/subunit of cytochrome bc1 complex (Ubiquinol-cytochrome c reductase)"/>
    <property type="match status" value="1"/>
</dbReference>
<dbReference type="SUPFAM" id="SSF81342">
    <property type="entry name" value="Transmembrane di-heme cytochromes"/>
    <property type="match status" value="1"/>
</dbReference>
<dbReference type="PROSITE" id="PS51003">
    <property type="entry name" value="CYTB_CTER"/>
    <property type="match status" value="1"/>
</dbReference>
<dbReference type="PROSITE" id="PS51002">
    <property type="entry name" value="CYTB_NTER"/>
    <property type="match status" value="1"/>
</dbReference>
<protein>
    <recommendedName>
        <fullName>Cytochrome b</fullName>
    </recommendedName>
    <alternativeName>
        <fullName>Complex III subunit 3</fullName>
    </alternativeName>
    <alternativeName>
        <fullName>Complex III subunit III</fullName>
    </alternativeName>
    <alternativeName>
        <fullName>Cytochrome b-c1 complex subunit 3</fullName>
    </alternativeName>
    <alternativeName>
        <fullName>Ubiquinol-cytochrome-c reductase complex cytochrome b subunit</fullName>
    </alternativeName>
</protein>
<geneLocation type="mitochondrion"/>
<name>CYB_EUNNO</name>